<dbReference type="EC" id="6.1.1.20" evidence="1"/>
<dbReference type="EMBL" id="CP000437">
    <property type="protein sequence ID" value="ABI83036.1"/>
    <property type="molecule type" value="Genomic_DNA"/>
</dbReference>
<dbReference type="RefSeq" id="WP_003016273.1">
    <property type="nucleotide sequence ID" value="NC_017463.1"/>
</dbReference>
<dbReference type="SMR" id="Q0BLJ8"/>
<dbReference type="KEGG" id="fth:FTH_1173"/>
<dbReference type="GO" id="GO:0005737">
    <property type="term" value="C:cytoplasm"/>
    <property type="evidence" value="ECO:0007669"/>
    <property type="project" value="UniProtKB-SubCell"/>
</dbReference>
<dbReference type="GO" id="GO:0005524">
    <property type="term" value="F:ATP binding"/>
    <property type="evidence" value="ECO:0007669"/>
    <property type="project" value="UniProtKB-UniRule"/>
</dbReference>
<dbReference type="GO" id="GO:0000287">
    <property type="term" value="F:magnesium ion binding"/>
    <property type="evidence" value="ECO:0007669"/>
    <property type="project" value="UniProtKB-UniRule"/>
</dbReference>
<dbReference type="GO" id="GO:0004826">
    <property type="term" value="F:phenylalanine-tRNA ligase activity"/>
    <property type="evidence" value="ECO:0007669"/>
    <property type="project" value="UniProtKB-UniRule"/>
</dbReference>
<dbReference type="GO" id="GO:0000049">
    <property type="term" value="F:tRNA binding"/>
    <property type="evidence" value="ECO:0007669"/>
    <property type="project" value="InterPro"/>
</dbReference>
<dbReference type="GO" id="GO:0006432">
    <property type="term" value="P:phenylalanyl-tRNA aminoacylation"/>
    <property type="evidence" value="ECO:0007669"/>
    <property type="project" value="UniProtKB-UniRule"/>
</dbReference>
<dbReference type="CDD" id="cd00496">
    <property type="entry name" value="PheRS_alpha_core"/>
    <property type="match status" value="1"/>
</dbReference>
<dbReference type="FunFam" id="3.30.930.10:FF:000003">
    <property type="entry name" value="Phenylalanine--tRNA ligase alpha subunit"/>
    <property type="match status" value="1"/>
</dbReference>
<dbReference type="Gene3D" id="3.30.930.10">
    <property type="entry name" value="Bira Bifunctional Protein, Domain 2"/>
    <property type="match status" value="1"/>
</dbReference>
<dbReference type="HAMAP" id="MF_00281">
    <property type="entry name" value="Phe_tRNA_synth_alpha1"/>
    <property type="match status" value="1"/>
</dbReference>
<dbReference type="InterPro" id="IPR006195">
    <property type="entry name" value="aa-tRNA-synth_II"/>
</dbReference>
<dbReference type="InterPro" id="IPR045864">
    <property type="entry name" value="aa-tRNA-synth_II/BPL/LPL"/>
</dbReference>
<dbReference type="InterPro" id="IPR004529">
    <property type="entry name" value="Phe-tRNA-synth_IIc_asu"/>
</dbReference>
<dbReference type="InterPro" id="IPR004188">
    <property type="entry name" value="Phe-tRNA_ligase_II_N"/>
</dbReference>
<dbReference type="InterPro" id="IPR022911">
    <property type="entry name" value="Phe_tRNA_ligase_alpha1_bac"/>
</dbReference>
<dbReference type="InterPro" id="IPR002319">
    <property type="entry name" value="Phenylalanyl-tRNA_Synthase"/>
</dbReference>
<dbReference type="InterPro" id="IPR010978">
    <property type="entry name" value="tRNA-bd_arm"/>
</dbReference>
<dbReference type="NCBIfam" id="TIGR00468">
    <property type="entry name" value="pheS"/>
    <property type="match status" value="1"/>
</dbReference>
<dbReference type="PANTHER" id="PTHR11538:SF41">
    <property type="entry name" value="PHENYLALANINE--TRNA LIGASE, MITOCHONDRIAL"/>
    <property type="match status" value="1"/>
</dbReference>
<dbReference type="PANTHER" id="PTHR11538">
    <property type="entry name" value="PHENYLALANYL-TRNA SYNTHETASE"/>
    <property type="match status" value="1"/>
</dbReference>
<dbReference type="Pfam" id="PF02912">
    <property type="entry name" value="Phe_tRNA-synt_N"/>
    <property type="match status" value="1"/>
</dbReference>
<dbReference type="Pfam" id="PF01409">
    <property type="entry name" value="tRNA-synt_2d"/>
    <property type="match status" value="1"/>
</dbReference>
<dbReference type="SUPFAM" id="SSF55681">
    <property type="entry name" value="Class II aaRS and biotin synthetases"/>
    <property type="match status" value="1"/>
</dbReference>
<dbReference type="SUPFAM" id="SSF46589">
    <property type="entry name" value="tRNA-binding arm"/>
    <property type="match status" value="1"/>
</dbReference>
<dbReference type="PROSITE" id="PS50862">
    <property type="entry name" value="AA_TRNA_LIGASE_II"/>
    <property type="match status" value="1"/>
</dbReference>
<accession>Q0BLJ8</accession>
<reference key="1">
    <citation type="journal article" date="2006" name="J. Bacteriol.">
        <title>Chromosome rearrangement and diversification of Francisella tularensis revealed by the type B (OSU18) genome sequence.</title>
        <authorList>
            <person name="Petrosino J.F."/>
            <person name="Xiang Q."/>
            <person name="Karpathy S.E."/>
            <person name="Jiang H."/>
            <person name="Yerrapragada S."/>
            <person name="Liu Y."/>
            <person name="Gioia J."/>
            <person name="Hemphill L."/>
            <person name="Gonzalez A."/>
            <person name="Raghavan T.M."/>
            <person name="Uzman A."/>
            <person name="Fox G.E."/>
            <person name="Highlander S."/>
            <person name="Reichard M."/>
            <person name="Morton R.J."/>
            <person name="Clinkenbeard K.D."/>
            <person name="Weinstock G.M."/>
        </authorList>
    </citation>
    <scope>NUCLEOTIDE SEQUENCE [LARGE SCALE GENOMIC DNA]</scope>
    <source>
        <strain>OSU18</strain>
    </source>
</reference>
<organism>
    <name type="scientific">Francisella tularensis subsp. holarctica (strain OSU18)</name>
    <dbReference type="NCBI Taxonomy" id="393011"/>
    <lineage>
        <taxon>Bacteria</taxon>
        <taxon>Pseudomonadati</taxon>
        <taxon>Pseudomonadota</taxon>
        <taxon>Gammaproteobacteria</taxon>
        <taxon>Thiotrichales</taxon>
        <taxon>Francisellaceae</taxon>
        <taxon>Francisella</taxon>
    </lineage>
</organism>
<feature type="chain" id="PRO_1000006834" description="Phenylalanine--tRNA ligase alpha subunit">
    <location>
        <begin position="1"/>
        <end position="337"/>
    </location>
</feature>
<feature type="binding site" evidence="1">
    <location>
        <position position="252"/>
    </location>
    <ligand>
        <name>Mg(2+)</name>
        <dbReference type="ChEBI" id="CHEBI:18420"/>
        <note>shared with beta subunit</note>
    </ligand>
</feature>
<evidence type="ECO:0000255" key="1">
    <source>
        <dbReference type="HAMAP-Rule" id="MF_00281"/>
    </source>
</evidence>
<proteinExistence type="inferred from homology"/>
<protein>
    <recommendedName>
        <fullName evidence="1">Phenylalanine--tRNA ligase alpha subunit</fullName>
        <ecNumber evidence="1">6.1.1.20</ecNumber>
    </recommendedName>
    <alternativeName>
        <fullName evidence="1">Phenylalanyl-tRNA synthetase alpha subunit</fullName>
        <shortName evidence="1">PheRS</shortName>
    </alternativeName>
</protein>
<sequence>MQIVEQMKDKALAELNLVKDKKTLDDIRVKYLGKKGELTEMMKLIATLPNDEKPKLGQAVNIAKQALQEAINLKLANFEEQELNEKLAQEKIDITLSGVGQNQGSLHPVTKTLNRIEAFFKQNGFAIEFGPEIESDYYNFETLNIPSHHPARAMHDTFYIDETHVLRTHTSGVQIRTMEKQQPPIRIIAPGRVYRCDSDITHTPMFHQVEGLLVDKDVSFADLKGLLHVFLNSFFEKDLKVRFRPSYFPFTEPSAEADIECVMCDGKGCRVCKHTGWLEVLGCGMVHPKVLKAGNIDSEKYQGFAFGMGVERLSMLRYGIDDLRMFFENDLRFLKQF</sequence>
<gene>
    <name evidence="1" type="primary">pheS</name>
    <name type="ordered locus">FTH_1173</name>
</gene>
<name>SYFA_FRATO</name>
<comment type="catalytic activity">
    <reaction evidence="1">
        <text>tRNA(Phe) + L-phenylalanine + ATP = L-phenylalanyl-tRNA(Phe) + AMP + diphosphate + H(+)</text>
        <dbReference type="Rhea" id="RHEA:19413"/>
        <dbReference type="Rhea" id="RHEA-COMP:9668"/>
        <dbReference type="Rhea" id="RHEA-COMP:9699"/>
        <dbReference type="ChEBI" id="CHEBI:15378"/>
        <dbReference type="ChEBI" id="CHEBI:30616"/>
        <dbReference type="ChEBI" id="CHEBI:33019"/>
        <dbReference type="ChEBI" id="CHEBI:58095"/>
        <dbReference type="ChEBI" id="CHEBI:78442"/>
        <dbReference type="ChEBI" id="CHEBI:78531"/>
        <dbReference type="ChEBI" id="CHEBI:456215"/>
        <dbReference type="EC" id="6.1.1.20"/>
    </reaction>
</comment>
<comment type="cofactor">
    <cofactor evidence="1">
        <name>Mg(2+)</name>
        <dbReference type="ChEBI" id="CHEBI:18420"/>
    </cofactor>
    <text evidence="1">Binds 2 magnesium ions per tetramer.</text>
</comment>
<comment type="subunit">
    <text evidence="1">Tetramer of two alpha and two beta subunits.</text>
</comment>
<comment type="subcellular location">
    <subcellularLocation>
        <location evidence="1">Cytoplasm</location>
    </subcellularLocation>
</comment>
<comment type="similarity">
    <text evidence="1">Belongs to the class-II aminoacyl-tRNA synthetase family. Phe-tRNA synthetase alpha subunit type 1 subfamily.</text>
</comment>
<keyword id="KW-0030">Aminoacyl-tRNA synthetase</keyword>
<keyword id="KW-0067">ATP-binding</keyword>
<keyword id="KW-0963">Cytoplasm</keyword>
<keyword id="KW-0436">Ligase</keyword>
<keyword id="KW-0460">Magnesium</keyword>
<keyword id="KW-0479">Metal-binding</keyword>
<keyword id="KW-0547">Nucleotide-binding</keyword>
<keyword id="KW-0648">Protein biosynthesis</keyword>